<comment type="function">
    <text evidence="1">Catalyzes the phosphorolysis of diverse nucleosides, yielding D-ribose 1-phosphate and the respective free bases. Can use uridine, adenosine, guanosine, cytidine, thymidine, inosine and xanthosine as substrates. Also catalyzes the reverse reactions.</text>
</comment>
<comment type="catalytic activity">
    <reaction evidence="1">
        <text>a purine D-ribonucleoside + phosphate = a purine nucleobase + alpha-D-ribose 1-phosphate</text>
        <dbReference type="Rhea" id="RHEA:19805"/>
        <dbReference type="ChEBI" id="CHEBI:26386"/>
        <dbReference type="ChEBI" id="CHEBI:43474"/>
        <dbReference type="ChEBI" id="CHEBI:57720"/>
        <dbReference type="ChEBI" id="CHEBI:142355"/>
        <dbReference type="EC" id="2.4.2.1"/>
    </reaction>
</comment>
<comment type="catalytic activity">
    <reaction evidence="1">
        <text>adenosine + phosphate = alpha-D-ribose 1-phosphate + adenine</text>
        <dbReference type="Rhea" id="RHEA:27642"/>
        <dbReference type="ChEBI" id="CHEBI:16335"/>
        <dbReference type="ChEBI" id="CHEBI:16708"/>
        <dbReference type="ChEBI" id="CHEBI:43474"/>
        <dbReference type="ChEBI" id="CHEBI:57720"/>
        <dbReference type="EC" id="2.4.2.1"/>
    </reaction>
</comment>
<comment type="catalytic activity">
    <reaction evidence="1">
        <text>cytidine + phosphate = cytosine + alpha-D-ribose 1-phosphate</text>
        <dbReference type="Rhea" id="RHEA:52540"/>
        <dbReference type="ChEBI" id="CHEBI:16040"/>
        <dbReference type="ChEBI" id="CHEBI:17562"/>
        <dbReference type="ChEBI" id="CHEBI:43474"/>
        <dbReference type="ChEBI" id="CHEBI:57720"/>
        <dbReference type="EC" id="2.4.2.2"/>
    </reaction>
</comment>
<comment type="catalytic activity">
    <reaction evidence="1">
        <text>guanosine + phosphate = alpha-D-ribose 1-phosphate + guanine</text>
        <dbReference type="Rhea" id="RHEA:13233"/>
        <dbReference type="ChEBI" id="CHEBI:16235"/>
        <dbReference type="ChEBI" id="CHEBI:16750"/>
        <dbReference type="ChEBI" id="CHEBI:43474"/>
        <dbReference type="ChEBI" id="CHEBI:57720"/>
        <dbReference type="EC" id="2.4.2.1"/>
    </reaction>
</comment>
<comment type="catalytic activity">
    <reaction evidence="1">
        <text>inosine + phosphate = alpha-D-ribose 1-phosphate + hypoxanthine</text>
        <dbReference type="Rhea" id="RHEA:27646"/>
        <dbReference type="ChEBI" id="CHEBI:17368"/>
        <dbReference type="ChEBI" id="CHEBI:17596"/>
        <dbReference type="ChEBI" id="CHEBI:43474"/>
        <dbReference type="ChEBI" id="CHEBI:57720"/>
        <dbReference type="EC" id="2.4.2.1"/>
    </reaction>
</comment>
<comment type="catalytic activity">
    <reaction evidence="1">
        <text>thymidine + phosphate = 2-deoxy-alpha-D-ribose 1-phosphate + thymine</text>
        <dbReference type="Rhea" id="RHEA:16037"/>
        <dbReference type="ChEBI" id="CHEBI:17748"/>
        <dbReference type="ChEBI" id="CHEBI:17821"/>
        <dbReference type="ChEBI" id="CHEBI:43474"/>
        <dbReference type="ChEBI" id="CHEBI:57259"/>
        <dbReference type="EC" id="2.4.2.2"/>
    </reaction>
</comment>
<comment type="catalytic activity">
    <reaction evidence="1">
        <text>uridine + phosphate = alpha-D-ribose 1-phosphate + uracil</text>
        <dbReference type="Rhea" id="RHEA:24388"/>
        <dbReference type="ChEBI" id="CHEBI:16704"/>
        <dbReference type="ChEBI" id="CHEBI:17568"/>
        <dbReference type="ChEBI" id="CHEBI:43474"/>
        <dbReference type="ChEBI" id="CHEBI:57720"/>
        <dbReference type="EC" id="2.4.2.2"/>
    </reaction>
</comment>
<comment type="catalytic activity">
    <reaction evidence="1">
        <text>xanthosine + phosphate = alpha-D-ribose 1-phosphate + xanthine</text>
        <dbReference type="Rhea" id="RHEA:27638"/>
        <dbReference type="ChEBI" id="CHEBI:17712"/>
        <dbReference type="ChEBI" id="CHEBI:18107"/>
        <dbReference type="ChEBI" id="CHEBI:43474"/>
        <dbReference type="ChEBI" id="CHEBI:57720"/>
        <dbReference type="EC" id="2.4.2.1"/>
    </reaction>
</comment>
<comment type="similarity">
    <text evidence="1">Belongs to the nucleoside phosphorylase PpnP family.</text>
</comment>
<keyword id="KW-0328">Glycosyltransferase</keyword>
<keyword id="KW-0808">Transferase</keyword>
<evidence type="ECO:0000255" key="1">
    <source>
        <dbReference type="HAMAP-Rule" id="MF_01537"/>
    </source>
</evidence>
<gene>
    <name evidence="1" type="primary">ppnP</name>
    <name type="ordered locus">Psyr_1831</name>
</gene>
<proteinExistence type="inferred from homology"/>
<accession>Q4ZVE4</accession>
<sequence length="93" mass="10356">MFKVNEYFDGTVKSIAFTQADGEATIGVMAAGEYEFGTAQREIMHVISGELSVKLPDSTDWETFATGNQFNVPANSKFQIKVKVDTAYLCEYR</sequence>
<protein>
    <recommendedName>
        <fullName evidence="1">Pyrimidine/purine nucleoside phosphorylase</fullName>
        <ecNumber evidence="1">2.4.2.1</ecNumber>
        <ecNumber evidence="1">2.4.2.2</ecNumber>
    </recommendedName>
    <alternativeName>
        <fullName evidence="1">Adenosine phosphorylase</fullName>
    </alternativeName>
    <alternativeName>
        <fullName evidence="1">Cytidine phosphorylase</fullName>
    </alternativeName>
    <alternativeName>
        <fullName evidence="1">Guanosine phosphorylase</fullName>
    </alternativeName>
    <alternativeName>
        <fullName evidence="1">Inosine phosphorylase</fullName>
    </alternativeName>
    <alternativeName>
        <fullName evidence="1">Thymidine phosphorylase</fullName>
    </alternativeName>
    <alternativeName>
        <fullName evidence="1">Uridine phosphorylase</fullName>
    </alternativeName>
    <alternativeName>
        <fullName evidence="1">Xanthosine phosphorylase</fullName>
    </alternativeName>
</protein>
<organism>
    <name type="scientific">Pseudomonas syringae pv. syringae (strain B728a)</name>
    <dbReference type="NCBI Taxonomy" id="205918"/>
    <lineage>
        <taxon>Bacteria</taxon>
        <taxon>Pseudomonadati</taxon>
        <taxon>Pseudomonadota</taxon>
        <taxon>Gammaproteobacteria</taxon>
        <taxon>Pseudomonadales</taxon>
        <taxon>Pseudomonadaceae</taxon>
        <taxon>Pseudomonas</taxon>
        <taxon>Pseudomonas syringae</taxon>
    </lineage>
</organism>
<dbReference type="EC" id="2.4.2.1" evidence="1"/>
<dbReference type="EC" id="2.4.2.2" evidence="1"/>
<dbReference type="EMBL" id="CP000075">
    <property type="protein sequence ID" value="AAY36878.1"/>
    <property type="molecule type" value="Genomic_DNA"/>
</dbReference>
<dbReference type="RefSeq" id="WP_003343080.1">
    <property type="nucleotide sequence ID" value="NC_007005.1"/>
</dbReference>
<dbReference type="RefSeq" id="YP_234916.1">
    <property type="nucleotide sequence ID" value="NC_007005.1"/>
</dbReference>
<dbReference type="SMR" id="Q4ZVE4"/>
<dbReference type="STRING" id="205918.Psyr_1831"/>
<dbReference type="KEGG" id="psb:Psyr_1831"/>
<dbReference type="PATRIC" id="fig|205918.7.peg.1875"/>
<dbReference type="eggNOG" id="COG3123">
    <property type="taxonomic scope" value="Bacteria"/>
</dbReference>
<dbReference type="HOGENOM" id="CLU_157874_0_0_6"/>
<dbReference type="OrthoDB" id="9793848at2"/>
<dbReference type="Proteomes" id="UP000000426">
    <property type="component" value="Chromosome"/>
</dbReference>
<dbReference type="GO" id="GO:0005829">
    <property type="term" value="C:cytosol"/>
    <property type="evidence" value="ECO:0007669"/>
    <property type="project" value="TreeGrafter"/>
</dbReference>
<dbReference type="GO" id="GO:0047975">
    <property type="term" value="F:guanosine phosphorylase activity"/>
    <property type="evidence" value="ECO:0007669"/>
    <property type="project" value="UniProtKB-EC"/>
</dbReference>
<dbReference type="GO" id="GO:0004731">
    <property type="term" value="F:purine-nucleoside phosphorylase activity"/>
    <property type="evidence" value="ECO:0007669"/>
    <property type="project" value="UniProtKB-UniRule"/>
</dbReference>
<dbReference type="GO" id="GO:0009032">
    <property type="term" value="F:thymidine phosphorylase activity"/>
    <property type="evidence" value="ECO:0007669"/>
    <property type="project" value="UniProtKB-EC"/>
</dbReference>
<dbReference type="GO" id="GO:0004850">
    <property type="term" value="F:uridine phosphorylase activity"/>
    <property type="evidence" value="ECO:0007669"/>
    <property type="project" value="UniProtKB-EC"/>
</dbReference>
<dbReference type="CDD" id="cd20296">
    <property type="entry name" value="cupin_PpnP-like"/>
    <property type="match status" value="1"/>
</dbReference>
<dbReference type="FunFam" id="2.60.120.10:FF:000016">
    <property type="entry name" value="Pyrimidine/purine nucleoside phosphorylase"/>
    <property type="match status" value="1"/>
</dbReference>
<dbReference type="Gene3D" id="2.60.120.10">
    <property type="entry name" value="Jelly Rolls"/>
    <property type="match status" value="1"/>
</dbReference>
<dbReference type="HAMAP" id="MF_01537">
    <property type="entry name" value="Nucleos_phosphorylase_PpnP"/>
    <property type="match status" value="1"/>
</dbReference>
<dbReference type="InterPro" id="IPR009664">
    <property type="entry name" value="Ppnp"/>
</dbReference>
<dbReference type="InterPro" id="IPR014710">
    <property type="entry name" value="RmlC-like_jellyroll"/>
</dbReference>
<dbReference type="InterPro" id="IPR011051">
    <property type="entry name" value="RmlC_Cupin_sf"/>
</dbReference>
<dbReference type="PANTHER" id="PTHR36540">
    <property type="entry name" value="PYRIMIDINE/PURINE NUCLEOSIDE PHOSPHORYLASE"/>
    <property type="match status" value="1"/>
</dbReference>
<dbReference type="PANTHER" id="PTHR36540:SF1">
    <property type="entry name" value="PYRIMIDINE_PURINE NUCLEOSIDE PHOSPHORYLASE"/>
    <property type="match status" value="1"/>
</dbReference>
<dbReference type="Pfam" id="PF06865">
    <property type="entry name" value="Ppnp"/>
    <property type="match status" value="1"/>
</dbReference>
<dbReference type="SUPFAM" id="SSF51182">
    <property type="entry name" value="RmlC-like cupins"/>
    <property type="match status" value="1"/>
</dbReference>
<name>PPNP_PSEU2</name>
<reference key="1">
    <citation type="journal article" date="2005" name="Proc. Natl. Acad. Sci. U.S.A.">
        <title>Comparison of the complete genome sequences of Pseudomonas syringae pv. syringae B728a and pv. tomato DC3000.</title>
        <authorList>
            <person name="Feil H."/>
            <person name="Feil W.S."/>
            <person name="Chain P."/>
            <person name="Larimer F."/>
            <person name="Dibartolo G."/>
            <person name="Copeland A."/>
            <person name="Lykidis A."/>
            <person name="Trong S."/>
            <person name="Nolan M."/>
            <person name="Goltsman E."/>
            <person name="Thiel J."/>
            <person name="Malfatti S."/>
            <person name="Loper J.E."/>
            <person name="Lapidus A."/>
            <person name="Detter J.C."/>
            <person name="Land M."/>
            <person name="Richardson P.M."/>
            <person name="Kyrpides N.C."/>
            <person name="Ivanova N."/>
            <person name="Lindow S.E."/>
        </authorList>
    </citation>
    <scope>NUCLEOTIDE SEQUENCE [LARGE SCALE GENOMIC DNA]</scope>
    <source>
        <strain>B728a</strain>
    </source>
</reference>
<feature type="chain" id="PRO_0000298714" description="Pyrimidine/purine nucleoside phosphorylase">
    <location>
        <begin position="1"/>
        <end position="93"/>
    </location>
</feature>